<gene>
    <name evidence="1" type="primary">pyrH</name>
    <name type="ordered locus">NWMN_1168</name>
</gene>
<accession>A6QGF8</accession>
<organism>
    <name type="scientific">Staphylococcus aureus (strain Newman)</name>
    <dbReference type="NCBI Taxonomy" id="426430"/>
    <lineage>
        <taxon>Bacteria</taxon>
        <taxon>Bacillati</taxon>
        <taxon>Bacillota</taxon>
        <taxon>Bacilli</taxon>
        <taxon>Bacillales</taxon>
        <taxon>Staphylococcaceae</taxon>
        <taxon>Staphylococcus</taxon>
    </lineage>
</organism>
<sequence length="240" mass="26159">MAQISKYKRVVLKLSGEALAGEKGFGINPVIIKSVAEQVAEVAKMDCEIAVIVGGGNIWRGKTGSDLGMDRGTADYMGMLATVMNALALQDSLEQLDCDTRVLTSIEMKQVAEPYIRRRAIRHLEKKRIVIFAAGIGNPYFSTDTTAALRAAEVEADVILMGKNNVDGVYSADPKVNKDAVKYEHLTHIQMLQEGLQVMDSTASSFCMDNNIPLTVFSIMEEGNIKRAVMGEKIGTLITK</sequence>
<keyword id="KW-0021">Allosteric enzyme</keyword>
<keyword id="KW-0067">ATP-binding</keyword>
<keyword id="KW-0963">Cytoplasm</keyword>
<keyword id="KW-0418">Kinase</keyword>
<keyword id="KW-0547">Nucleotide-binding</keyword>
<keyword id="KW-0665">Pyrimidine biosynthesis</keyword>
<keyword id="KW-0808">Transferase</keyword>
<name>PYRH_STAAE</name>
<dbReference type="EC" id="2.7.4.22" evidence="1"/>
<dbReference type="EMBL" id="AP009351">
    <property type="protein sequence ID" value="BAF67440.1"/>
    <property type="status" value="ALT_INIT"/>
    <property type="molecule type" value="Genomic_DNA"/>
</dbReference>
<dbReference type="RefSeq" id="WP_000057329.1">
    <property type="nucleotide sequence ID" value="NZ_JBBIAE010000001.1"/>
</dbReference>
<dbReference type="SMR" id="A6QGF8"/>
<dbReference type="KEGG" id="sae:NWMN_1168"/>
<dbReference type="HOGENOM" id="CLU_033861_0_0_9"/>
<dbReference type="UniPathway" id="UPA00159">
    <property type="reaction ID" value="UER00275"/>
</dbReference>
<dbReference type="Proteomes" id="UP000006386">
    <property type="component" value="Chromosome"/>
</dbReference>
<dbReference type="GO" id="GO:0005737">
    <property type="term" value="C:cytoplasm"/>
    <property type="evidence" value="ECO:0007669"/>
    <property type="project" value="UniProtKB-SubCell"/>
</dbReference>
<dbReference type="GO" id="GO:0005524">
    <property type="term" value="F:ATP binding"/>
    <property type="evidence" value="ECO:0007669"/>
    <property type="project" value="UniProtKB-KW"/>
</dbReference>
<dbReference type="GO" id="GO:0033862">
    <property type="term" value="F:UMP kinase activity"/>
    <property type="evidence" value="ECO:0007669"/>
    <property type="project" value="UniProtKB-EC"/>
</dbReference>
<dbReference type="GO" id="GO:0044210">
    <property type="term" value="P:'de novo' CTP biosynthetic process"/>
    <property type="evidence" value="ECO:0007669"/>
    <property type="project" value="UniProtKB-UniRule"/>
</dbReference>
<dbReference type="GO" id="GO:0006225">
    <property type="term" value="P:UDP biosynthetic process"/>
    <property type="evidence" value="ECO:0007669"/>
    <property type="project" value="TreeGrafter"/>
</dbReference>
<dbReference type="CDD" id="cd04254">
    <property type="entry name" value="AAK_UMPK-PyrH-Ec"/>
    <property type="match status" value="1"/>
</dbReference>
<dbReference type="FunFam" id="3.40.1160.10:FF:000001">
    <property type="entry name" value="Uridylate kinase"/>
    <property type="match status" value="1"/>
</dbReference>
<dbReference type="Gene3D" id="3.40.1160.10">
    <property type="entry name" value="Acetylglutamate kinase-like"/>
    <property type="match status" value="1"/>
</dbReference>
<dbReference type="HAMAP" id="MF_01220_B">
    <property type="entry name" value="PyrH_B"/>
    <property type="match status" value="1"/>
</dbReference>
<dbReference type="InterPro" id="IPR036393">
    <property type="entry name" value="AceGlu_kinase-like_sf"/>
</dbReference>
<dbReference type="InterPro" id="IPR001048">
    <property type="entry name" value="Asp/Glu/Uridylate_kinase"/>
</dbReference>
<dbReference type="InterPro" id="IPR011817">
    <property type="entry name" value="Uridylate_kinase"/>
</dbReference>
<dbReference type="InterPro" id="IPR015963">
    <property type="entry name" value="Uridylate_kinase_bac"/>
</dbReference>
<dbReference type="NCBIfam" id="TIGR02075">
    <property type="entry name" value="pyrH_bact"/>
    <property type="match status" value="1"/>
</dbReference>
<dbReference type="PANTHER" id="PTHR42833">
    <property type="entry name" value="URIDYLATE KINASE"/>
    <property type="match status" value="1"/>
</dbReference>
<dbReference type="PANTHER" id="PTHR42833:SF4">
    <property type="entry name" value="URIDYLATE KINASE PUMPKIN, CHLOROPLASTIC"/>
    <property type="match status" value="1"/>
</dbReference>
<dbReference type="Pfam" id="PF00696">
    <property type="entry name" value="AA_kinase"/>
    <property type="match status" value="1"/>
</dbReference>
<dbReference type="PIRSF" id="PIRSF005650">
    <property type="entry name" value="Uridylate_kin"/>
    <property type="match status" value="1"/>
</dbReference>
<dbReference type="SUPFAM" id="SSF53633">
    <property type="entry name" value="Carbamate kinase-like"/>
    <property type="match status" value="1"/>
</dbReference>
<proteinExistence type="inferred from homology"/>
<feature type="chain" id="PRO_0000323955" description="Uridylate kinase">
    <location>
        <begin position="1"/>
        <end position="240"/>
    </location>
</feature>
<feature type="region of interest" description="Involved in allosteric activation by GTP" evidence="1">
    <location>
        <begin position="21"/>
        <end position="26"/>
    </location>
</feature>
<feature type="binding site" evidence="1">
    <location>
        <begin position="13"/>
        <end position="16"/>
    </location>
    <ligand>
        <name>ATP</name>
        <dbReference type="ChEBI" id="CHEBI:30616"/>
    </ligand>
</feature>
<feature type="binding site" evidence="1">
    <location>
        <position position="55"/>
    </location>
    <ligand>
        <name>UMP</name>
        <dbReference type="ChEBI" id="CHEBI:57865"/>
    </ligand>
</feature>
<feature type="binding site" evidence="1">
    <location>
        <position position="56"/>
    </location>
    <ligand>
        <name>ATP</name>
        <dbReference type="ChEBI" id="CHEBI:30616"/>
    </ligand>
</feature>
<feature type="binding site" evidence="1">
    <location>
        <position position="60"/>
    </location>
    <ligand>
        <name>ATP</name>
        <dbReference type="ChEBI" id="CHEBI:30616"/>
    </ligand>
</feature>
<feature type="binding site" evidence="1">
    <location>
        <position position="75"/>
    </location>
    <ligand>
        <name>UMP</name>
        <dbReference type="ChEBI" id="CHEBI:57865"/>
    </ligand>
</feature>
<feature type="binding site" evidence="1">
    <location>
        <begin position="136"/>
        <end position="143"/>
    </location>
    <ligand>
        <name>UMP</name>
        <dbReference type="ChEBI" id="CHEBI:57865"/>
    </ligand>
</feature>
<feature type="binding site" evidence="1">
    <location>
        <position position="164"/>
    </location>
    <ligand>
        <name>ATP</name>
        <dbReference type="ChEBI" id="CHEBI:30616"/>
    </ligand>
</feature>
<feature type="binding site" evidence="1">
    <location>
        <position position="170"/>
    </location>
    <ligand>
        <name>ATP</name>
        <dbReference type="ChEBI" id="CHEBI:30616"/>
    </ligand>
</feature>
<feature type="binding site" evidence="1">
    <location>
        <position position="173"/>
    </location>
    <ligand>
        <name>ATP</name>
        <dbReference type="ChEBI" id="CHEBI:30616"/>
    </ligand>
</feature>
<reference key="1">
    <citation type="journal article" date="2008" name="J. Bacteriol.">
        <title>Genome sequence of Staphylococcus aureus strain Newman and comparative analysis of staphylococcal genomes: polymorphism and evolution of two major pathogenicity islands.</title>
        <authorList>
            <person name="Baba T."/>
            <person name="Bae T."/>
            <person name="Schneewind O."/>
            <person name="Takeuchi F."/>
            <person name="Hiramatsu K."/>
        </authorList>
    </citation>
    <scope>NUCLEOTIDE SEQUENCE [LARGE SCALE GENOMIC DNA]</scope>
    <source>
        <strain>Newman</strain>
    </source>
</reference>
<evidence type="ECO:0000255" key="1">
    <source>
        <dbReference type="HAMAP-Rule" id="MF_01220"/>
    </source>
</evidence>
<evidence type="ECO:0000305" key="2"/>
<comment type="function">
    <text evidence="1">Catalyzes the reversible phosphorylation of UMP to UDP.</text>
</comment>
<comment type="catalytic activity">
    <reaction evidence="1">
        <text>UMP + ATP = UDP + ADP</text>
        <dbReference type="Rhea" id="RHEA:24400"/>
        <dbReference type="ChEBI" id="CHEBI:30616"/>
        <dbReference type="ChEBI" id="CHEBI:57865"/>
        <dbReference type="ChEBI" id="CHEBI:58223"/>
        <dbReference type="ChEBI" id="CHEBI:456216"/>
        <dbReference type="EC" id="2.7.4.22"/>
    </reaction>
</comment>
<comment type="activity regulation">
    <text evidence="1">Allosterically activated by GTP. Inhibited by UTP.</text>
</comment>
<comment type="pathway">
    <text evidence="1">Pyrimidine metabolism; CTP biosynthesis via de novo pathway; UDP from UMP (UMPK route): step 1/1.</text>
</comment>
<comment type="subunit">
    <text evidence="1">Homohexamer.</text>
</comment>
<comment type="subcellular location">
    <subcellularLocation>
        <location evidence="1">Cytoplasm</location>
    </subcellularLocation>
</comment>
<comment type="similarity">
    <text evidence="1">Belongs to the UMP kinase family.</text>
</comment>
<comment type="sequence caution" evidence="2">
    <conflict type="erroneous initiation">
        <sequence resource="EMBL-CDS" id="BAF67440"/>
    </conflict>
</comment>
<protein>
    <recommendedName>
        <fullName evidence="1">Uridylate kinase</fullName>
        <shortName evidence="1">UK</shortName>
        <ecNumber evidence="1">2.7.4.22</ecNumber>
    </recommendedName>
    <alternativeName>
        <fullName evidence="1">Uridine monophosphate kinase</fullName>
        <shortName evidence="1">UMP kinase</shortName>
        <shortName evidence="1">UMPK</shortName>
    </alternativeName>
</protein>